<organism>
    <name type="scientific">Fructilactobacillus sanfranciscensis</name>
    <name type="common">Lactobacillus sanfranciscensis</name>
    <dbReference type="NCBI Taxonomy" id="1625"/>
    <lineage>
        <taxon>Bacteria</taxon>
        <taxon>Bacillati</taxon>
        <taxon>Bacillota</taxon>
        <taxon>Bacilli</taxon>
        <taxon>Lactobacillales</taxon>
        <taxon>Lactobacillaceae</taxon>
        <taxon>Fructilactobacillus</taxon>
    </lineage>
</organism>
<evidence type="ECO:0000269" key="1">
    <source>
    </source>
</evidence>
<evidence type="ECO:0000303" key="2">
    <source>
    </source>
</evidence>
<evidence type="ECO:0000305" key="3"/>
<reference evidence="3" key="1">
    <citation type="journal article" date="2002" name="Proteomics">
        <title>High pressure effects step-wise altered protein expression in Lactobacillus sanfranciscensis.</title>
        <authorList>
            <person name="Drews O."/>
            <person name="Weiss W."/>
            <person name="Reil G."/>
            <person name="Parlar H."/>
            <person name="Wait R."/>
            <person name="Goerg A."/>
        </authorList>
    </citation>
    <scope>PROTEIN SEQUENCE</scope>
    <source>
        <strain evidence="1">ATCC 27651 / DSM 20451 / JCM 5668 / KCTC 3205 / NCIMB 702811 / NRRL B-3934 / L-12</strain>
    </source>
</reference>
<protein>
    <recommendedName>
        <fullName>Unknown protein 3 from 2D-PAGE</fullName>
    </recommendedName>
</protein>
<keyword id="KW-0903">Direct protein sequencing</keyword>
<feature type="chain" id="PRO_0000285974" description="Unknown protein 3 from 2D-PAGE">
    <location>
        <begin position="1" status="less than"/>
        <end position="8" status="greater than"/>
    </location>
</feature>
<feature type="non-terminal residue" evidence="2">
    <location>
        <position position="1"/>
    </location>
</feature>
<feature type="non-terminal residue" evidence="2">
    <location>
        <position position="8"/>
    </location>
</feature>
<accession>P83531</accession>
<sequence>SLGSGGSL</sequence>
<proteinExistence type="evidence at protein level"/>
<comment type="miscellaneous">
    <text evidence="1">On the 2D-gel the determined MW of this unknown protein is: 15 kDa.</text>
</comment>
<name>UP03_FRUSA</name>